<organism>
    <name type="scientific">Homo sapiens</name>
    <name type="common">Human</name>
    <dbReference type="NCBI Taxonomy" id="9606"/>
    <lineage>
        <taxon>Eukaryota</taxon>
        <taxon>Metazoa</taxon>
        <taxon>Chordata</taxon>
        <taxon>Craniata</taxon>
        <taxon>Vertebrata</taxon>
        <taxon>Euteleostomi</taxon>
        <taxon>Mammalia</taxon>
        <taxon>Eutheria</taxon>
        <taxon>Euarchontoglires</taxon>
        <taxon>Primates</taxon>
        <taxon>Haplorrhini</taxon>
        <taxon>Catarrhini</taxon>
        <taxon>Hominidae</taxon>
        <taxon>Homo</taxon>
    </lineage>
</organism>
<keyword id="KW-0002">3D-structure</keyword>
<keyword id="KW-1064">Adaptive immunity</keyword>
<keyword id="KW-0025">Alternative splicing</keyword>
<keyword id="KW-1003">Cell membrane</keyword>
<keyword id="KW-0903">Direct protein sequencing</keyword>
<keyword id="KW-1015">Disulfide bond</keyword>
<keyword id="KW-0325">Glycoprotein</keyword>
<keyword id="KW-0391">Immunity</keyword>
<keyword id="KW-1280">Immunoglobulin</keyword>
<keyword id="KW-0393">Immunoglobulin domain</keyword>
<keyword id="KW-0472">Membrane</keyword>
<keyword id="KW-1267">Proteomics identification</keyword>
<keyword id="KW-1185">Reference proteome</keyword>
<keyword id="KW-0964">Secreted</keyword>
<keyword id="KW-0812">Transmembrane</keyword>
<keyword id="KW-1133">Transmembrane helix</keyword>
<name>IGHM_HUMAN</name>
<evidence type="ECO:0000250" key="1">
    <source>
        <dbReference type="UniProtKB" id="P01872"/>
    </source>
</evidence>
<evidence type="ECO:0000255" key="2"/>
<evidence type="ECO:0000255" key="3">
    <source>
        <dbReference type="PROSITE-ProRule" id="PRU00114"/>
    </source>
</evidence>
<evidence type="ECO:0000269" key="4">
    <source>
    </source>
</evidence>
<evidence type="ECO:0000269" key="5">
    <source>
    </source>
</evidence>
<evidence type="ECO:0000269" key="6">
    <source>
    </source>
</evidence>
<evidence type="ECO:0000269" key="7">
    <source>
    </source>
</evidence>
<evidence type="ECO:0000269" key="8">
    <source>
    </source>
</evidence>
<evidence type="ECO:0000269" key="9">
    <source>
    </source>
</evidence>
<evidence type="ECO:0000269" key="10">
    <source>
    </source>
</evidence>
<evidence type="ECO:0000269" key="11">
    <source>
    </source>
</evidence>
<evidence type="ECO:0000269" key="12">
    <source>
    </source>
</evidence>
<evidence type="ECO:0000269" key="13">
    <source>
    </source>
</evidence>
<evidence type="ECO:0000269" key="14">
    <source>
    </source>
</evidence>
<evidence type="ECO:0000269" key="15">
    <source>
    </source>
</evidence>
<evidence type="ECO:0000269" key="16">
    <source>
    </source>
</evidence>
<evidence type="ECO:0000269" key="17">
    <source>
    </source>
</evidence>
<evidence type="ECO:0000269" key="18">
    <source>
    </source>
</evidence>
<evidence type="ECO:0000269" key="19">
    <source>
    </source>
</evidence>
<evidence type="ECO:0000269" key="20">
    <source>
    </source>
</evidence>
<evidence type="ECO:0000269" key="21">
    <source>
    </source>
</evidence>
<evidence type="ECO:0000269" key="22">
    <source>
    </source>
</evidence>
<evidence type="ECO:0000269" key="23">
    <source>
    </source>
</evidence>
<evidence type="ECO:0000303" key="24">
    <source>
    </source>
</evidence>
<evidence type="ECO:0000303" key="25">
    <source>
    </source>
</evidence>
<evidence type="ECO:0000303" key="26">
    <source>
    </source>
</evidence>
<evidence type="ECO:0000303" key="27">
    <source>
    </source>
</evidence>
<evidence type="ECO:0000303" key="28">
    <source ref="14"/>
</evidence>
<evidence type="ECO:0000305" key="29"/>
<evidence type="ECO:0000305" key="30">
    <source>
    </source>
</evidence>
<evidence type="ECO:0000305" key="31">
    <source>
    </source>
</evidence>
<evidence type="ECO:0000305" key="32">
    <source>
    </source>
</evidence>
<evidence type="ECO:0007744" key="33">
    <source>
        <dbReference type="PDB" id="1HEZ"/>
    </source>
</evidence>
<evidence type="ECO:0007744" key="34">
    <source>
        <dbReference type="PDB" id="2AGJ"/>
    </source>
</evidence>
<evidence type="ECO:0007744" key="35">
    <source>
        <dbReference type="PDB" id="6KXS"/>
    </source>
</evidence>
<evidence type="ECO:0007744" key="36">
    <source>
        <dbReference type="PDB" id="7XQ8"/>
    </source>
</evidence>
<evidence type="ECO:0007829" key="37">
    <source>
        <dbReference type="PDB" id="1HEZ"/>
    </source>
</evidence>
<evidence type="ECO:0007829" key="38">
    <source>
        <dbReference type="PDB" id="2AGJ"/>
    </source>
</evidence>
<evidence type="ECO:0007829" key="39">
    <source>
        <dbReference type="PDB" id="7K0C"/>
    </source>
</evidence>
<evidence type="ECO:0007829" key="40">
    <source>
        <dbReference type="PDB" id="7XQ8"/>
    </source>
</evidence>
<evidence type="ECO:0007829" key="41">
    <source>
        <dbReference type="PDB" id="7YSG"/>
    </source>
</evidence>
<evidence type="ECO:0007829" key="42">
    <source>
        <dbReference type="PDB" id="8BPG"/>
    </source>
</evidence>
<comment type="function">
    <text evidence="25 26 27">Constant region of immunoglobulin heavy chains. Immunoglobulins, also known as antibodies, are membrane-bound or secreted glycoproteins produced by B lymphocytes. In the recognition phase of humoral immunity, the membrane-bound immunoglobulins serve as receptors which, upon binding of a specific antigen, trigger the clonal expansion and differentiation of B lymphocytes into immunoglobulins-secreting plasma cells. Secreted immunoglobulins mediate the effector phase of humoral immunity, which results in the elimination of bound antigens (PubMed:20176268, PubMed:22158414). The antigen binding site is formed by the variable domain of one heavy chain, together with that of its associated light chain. Thus, each immunoglobulin has two antigen binding sites with remarkable affinity for a particular antigen. The variable domains are assembled by a process called V-(D)-J rearrangement and can then be subjected to somatic hypermutations which, after exposure to antigen and selection, allow affinity maturation for a particular antigen (PubMed:17576170, PubMed:20176268).</text>
</comment>
<comment type="function">
    <molecule>Isoform 1</molecule>
    <text evidence="1 5 9 14 16 19">Constant region of secreted IgM (sIgM), also known as the Fc region of IgM antibody. Able to multimerize, forms high order polymers, mainly pentamers and occasionally hexamers, providing for multivalency and high avidity recognition of antigens (PubMed:32029689, PubMed:37095205). Natural sIgM are polyreactive and recognize conserved self- and pathogen-derived structures, whereas immune sIgM are secreted only upon exposure to pathogens and are antigen-specific. Both natural and immune sIgM are required for an efficient humoral immune response to infection (By similarity). Mediates sIgM effector functions mostly via Fc receptors and the complement system. On lymphoid cells binds high-affinity Fc receptor FCMR and promotes induction of an efficient neutralizing IgG response while maintaining tolerance to self-antigens. Recruits C1q complement component to initiate the classical complement pathway, facilitating the recognition and neutralization of pathogens by the host. Together with C1q and mannose-binding lectin promotes the phagocytosis of apoptotic cells by macrophages, ensuring the clearance of potential autoimmune epitopes from tissues (By similarity) (PubMed:12847249, PubMed:19006321, PubMed:28230186, PubMed:32029689). Involved in mucosal immunity. It is transported by transcytosis across mucosal epithelium by PIGR and secreted on the apical side in complex with PIGR secretory component to scan mucosal lining for pathogens. IgM-antigen complexes undergo FCMR-mediated retrotranscytosis across mucosal M cells toward antigen-presenting cells in mucosal lymphoid tissues (By similarity) (PubMed:32029689).</text>
</comment>
<comment type="function">
    <molecule>Isoform 2</molecule>
    <text evidence="1 17">Constant region of membrane-bound IgM, part of the B cell receptor complex (BCR). IgM BCR provides constitutive tonic signaling for B cell survival. Mediates pre-BCR signaling that regulates B cell selection and rearrangement of Ig genes via allelic exclusion.</text>
</comment>
<comment type="subunit">
    <text evidence="16 17">The basic structural unit of both sIgM and mIgM molecules consists of two identical heavy chains and two identical light chains; disulfide-linked. N-terminal variable regions of the heavy and light chains form the antigen binding sites, whereas the C-terminal constant regions of the heavy chains interact with immune receptors to mediate effector functions.</text>
</comment>
<comment type="subunit">
    <molecule>Isoform 1</molecule>
    <text evidence="1 5 6 9 14 15 16 18 19">Part of IgM antibody. Forms high order oligomers, homopentamers stabilized by the JCHAIN and homohexamers that lack JCHAIN. The oligomerization amplifies an inherently low affinity of IgM antibodies for the antigen by multi-point attachment (avidity). Adjacent IgM protomers associate via interchain disulfide links to form an asymmetric pentameric structure with a 50 degree gap. A single copy of JCHAIN is covalently linked to the first and the fifth IgM monomers via interchain disulfide bonds thus closing the pentamer ring. Only JCHAIN-containing IgM binds PIGR secretory component (via D1-CDR1 region); this interaction is a prerequisite for IgM transcytosis across mucosal epithelium (PubMed:1472500, PubMed:30324136, PubMed:32029689, PubMed:36949194). Pentameric sIgM interacts (via CH4 domain) with FCRM (via Ig-like domain); the interaction is glycan-independent and multivalent theoretically involving up to eight binding sites for the IgM pentamer (PubMed:28230186, PubMed:36949194, PubMed:37095205). Interacts with FCAMR; this interaction facilitates the endocytosis of IgM-coated microbes or IgM-antigen immune complexes (By similarity). Antigen-bound IgM (via the Fc region) binds to globular domains of C1q component of the complement system, all three modules C1QA, C1QB and C1QC being involved in IgM binding; this interaction is multivalent (PubMed:12847249, PubMed:19006321). Pentameric sIgM (via Fc region) interacts with CD5L (via SRCR2) through interchain disulfide-linkages; this interaction protects CD5L from renal excretion and provides for high levels of CD5L in circulation (By similarity).</text>
</comment>
<comment type="subunit">
    <molecule>Isoform 2</molecule>
    <text evidence="17">Part of IgM B cell receptor complex on pre-B cells, immature and mature B cells. The BCR complex consists of one membrane-bound IgM molecule responsible for antigen binding, non-covalently associated with CD79A and CD79B signaling chains.</text>
</comment>
<comment type="subcellular location">
    <molecule>Isoform 1</molecule>
    <subcellularLocation>
        <location>Secreted</location>
    </subcellularLocation>
    <text evidence="29">During differentiation, B-lymphocytes switch from expression of membrane-bound IgM to secretion of IgM.</text>
</comment>
<comment type="subcellular location">
    <molecule>Isoform 2</molecule>
    <subcellularLocation>
        <location>Cell membrane</location>
        <topology evidence="2">Single-pass membrane protein</topology>
    </subcellularLocation>
</comment>
<comment type="alternative products">
    <event type="alternative splicing"/>
    <isoform>
        <id>P01871-2</id>
        <name>2</name>
        <name>Membrane-bound</name>
        <name>mIgM</name>
        <sequence type="displayed"/>
    </isoform>
    <isoform>
        <id>P01871-1</id>
        <name>1</name>
        <name>Secreted</name>
        <name>sIgM</name>
        <sequence type="described" ref="VSP_061838"/>
    </isoform>
</comment>
<comment type="domain">
    <molecule>Isoform 1</molecule>
    <text evidence="16">The C-terminal beta-strands mediate sIgM oligomerization. The region encompassing residues Tyr-437 to Met-453 in each protomer forms a beta-strand, and the ten strands arrange in two five-stranded parallel beta-sheets packed in an antiparallel way, reminiscent of beta-sheet amyloid structures.</text>
</comment>
<comment type="domain">
    <molecule>Isoform 1</molecule>
    <text evidence="19">The CH4 domains of pentameric IgM mediate multivalent interactions with the Ig-like domain of FCMR, thereby facilitating receptor clustering and signaling.</text>
</comment>
<comment type="domain">
    <molecule>Isoform 2</molecule>
    <text evidence="17">The transmembrane helices of two heavy chains and CD79A and CD79B chains assembly in a four-helix bundle structure that appears to be conserved among different BCR isotypes.</text>
</comment>
<comment type="PTM">
    <text evidence="14 16 17">N-glycosylated; important for IgM secretion and its localization at the plasma membrane. The interaction with FCMR is glycan-independent.</text>
</comment>
<comment type="polymorphism">
    <text evidence="29">There are several alleles. The sequence shown is that of IMGT allele IGHM*04.</text>
</comment>
<comment type="disease" evidence="23">
    <disease id="DI-01249">
        <name>Agammaglobulinemia 1, autosomal recessive</name>
        <acronym>AGM1</acronym>
        <description>A primary immunodeficiency characterized by profoundly low or absent serum antibodies and low or absent circulating B cells due to an early block of B-cell development. Affected individuals develop severe infections in the first years of life.</description>
        <dbReference type="MIM" id="601495"/>
    </disease>
    <text>The disease is caused by variants affecting the gene represented in this entry.</text>
</comment>
<comment type="caution">
    <text evidence="29">For an example of a full-length immunoglobulin mu heavy chain see AC P0DOX6.</text>
</comment>
<comment type="sequence caution" evidence="29">
    <conflict type="erroneous initiation">
        <sequence resource="EMBL-CDS" id="CAA33065"/>
    </conflict>
    <text>Truncated N-terminus.</text>
</comment>
<comment type="sequence caution" evidence="29">
    <conflict type="erroneous initiation">
        <sequence resource="EMBL-CDS" id="CAA33069"/>
    </conflict>
    <text>Truncated N-terminus.</text>
</comment>
<comment type="sequence caution" evidence="29">
    <conflict type="erroneous gene model prediction">
        <sequence resource="EMBL-CDS" id="CAA33071"/>
    </conflict>
</comment>
<comment type="sequence caution" evidence="29">
    <conflict type="erroneous initiation">
        <sequence resource="EMBL-CDS" id="CAA34971"/>
    </conflict>
    <text>Extended N-terminus.</text>
</comment>
<comment type="sequence caution" evidence="29">
    <conflict type="erroneous initiation">
        <sequence resource="EMBL-CDS" id="CAE82013"/>
    </conflict>
    <text>Truncated N-terminus.</text>
</comment>
<comment type="sequence caution" evidence="29">
    <conflict type="erroneous initiation">
        <sequence resource="EMBL-CDS" id="CAE82014"/>
    </conflict>
    <text>Truncated N-terminus.</text>
</comment>
<feature type="chain" id="PRO_0000153619" description="Immunoglobulin heavy constant mu">
    <location>
        <begin position="1" status="less than"/>
        <end position="474"/>
    </location>
</feature>
<feature type="topological domain" description="Extracellular" evidence="29">
    <location>
        <begin position="1"/>
        <end position="450"/>
    </location>
</feature>
<feature type="transmembrane region" description="Helical" evidence="2">
    <location>
        <begin position="451"/>
        <end position="471"/>
    </location>
</feature>
<feature type="topological domain" description="Cytoplasmic" evidence="29">
    <location>
        <begin position="472"/>
        <end position="474"/>
    </location>
</feature>
<feature type="domain" description="Ig-like 1" evidence="3">
    <location>
        <begin position="6"/>
        <end position="102"/>
    </location>
</feature>
<feature type="domain" description="Ig-like 2" evidence="3">
    <location>
        <begin position="111"/>
        <end position="211"/>
    </location>
</feature>
<feature type="domain" description="Ig-like 3" evidence="3">
    <location>
        <begin position="229"/>
        <end position="319"/>
    </location>
</feature>
<feature type="domain" description="Ig-like 4" evidence="3">
    <location>
        <begin position="329"/>
        <end position="430"/>
    </location>
</feature>
<feature type="region of interest" description="CH1">
    <location>
        <begin position="1"/>
        <end position="105"/>
    </location>
</feature>
<feature type="region of interest" description="CH2">
    <location>
        <begin position="106"/>
        <end position="217"/>
    </location>
</feature>
<feature type="region of interest" description="CH3">
    <location>
        <begin position="218"/>
        <end position="323"/>
    </location>
</feature>
<feature type="region of interest" description="CH4">
    <location>
        <begin position="324"/>
        <end position="452"/>
    </location>
</feature>
<feature type="glycosylation site" description="N-linked (GlcNAc...) (complex) asparagine" evidence="7 8 10 11 34">
    <location>
        <position position="46"/>
    </location>
</feature>
<feature type="glycosylation site" description="N-linked (GlcNAc...) (complex) asparagine" evidence="10 17 36">
    <location>
        <position position="209"/>
    </location>
</feature>
<feature type="glycosylation site" description="N-linked (GlcNAc...) asparagine" evidence="17 20 36">
    <location>
        <position position="272"/>
    </location>
</feature>
<feature type="glycosylation site" description="N-linked (GlcNAc...) asparagine" evidence="11 17 20 36">
    <location>
        <position position="279"/>
    </location>
</feature>
<feature type="disulfide bond" description="Interchain (with light chain)" evidence="20">
    <location>
        <position position="14"/>
    </location>
</feature>
<feature type="disulfide bond" evidence="4 8 33 34">
    <location>
        <begin position="28"/>
        <end position="88"/>
    </location>
</feature>
<feature type="disulfide bond" evidence="3 17 36">
    <location>
        <begin position="134"/>
        <end position="197"/>
    </location>
</feature>
<feature type="disulfide bond" description="Interchain (with heavy chain)" evidence="20">
    <location>
        <position position="214"/>
    </location>
</feature>
<feature type="disulfide bond" evidence="3 16 17 35 36">
    <location>
        <begin position="244"/>
        <end position="303"/>
    </location>
</feature>
<feature type="disulfide bond" description="Interchain (with heavy chain of another subunit)" evidence="16 20 35">
    <location>
        <position position="291"/>
    </location>
</feature>
<feature type="disulfide bond" evidence="3 16 17 35 36">
    <location>
        <begin position="351"/>
        <end position="413"/>
    </location>
</feature>
<feature type="disulfide bond" description="Interchain (with C-194 of CD5L)" evidence="1">
    <location>
        <position position="413"/>
    </location>
</feature>
<feature type="splice variant" id="VSP_061838" description="In isoform 1.">
    <original>EGEVSADEEGFENLWATASTFIVLFLLSLFYSTTVTLFKVK</original>
    <variation>GKPTLYNVSLVMSDTAGTCY</variation>
    <location>
        <begin position="434"/>
        <end position="474"/>
    </location>
</feature>
<feature type="sequence variant" id="VAR_077893" description="In IMGT allele IGHM*01." evidence="13">
    <original>F</original>
    <variation>L</variation>
    <location>
        <position position="40"/>
    </location>
</feature>
<feature type="sequence variant" id="VAR_003903" description="In IMGT allele IGHM*03." evidence="12">
    <original>G</original>
    <variation>S</variation>
    <location>
        <position position="191"/>
    </location>
</feature>
<feature type="sequence variant" id="VAR_003904" description="In dbSNP:rs12365." evidence="21">
    <original>V</original>
    <variation>G</variation>
    <location>
        <position position="215"/>
    </location>
</feature>
<feature type="sequence variant" id="VAR_077894" description="In IMGT allele IGHM*01 IMGT allele IGHM*02." evidence="13 22">
    <location>
        <position position="414"/>
    </location>
</feature>
<feature type="sequence variant" id="VAR_077895" description="In IMGT allele IGHM*02." evidence="22">
    <original>E</original>
    <variation>D</variation>
    <location>
        <position position="418"/>
    </location>
</feature>
<feature type="mutagenesis site" description="Has no effect on IgM BCR assembly; when associated with A-470." evidence="17">
    <original>Q</original>
    <variation>A</variation>
    <location>
        <position position="364"/>
    </location>
</feature>
<feature type="mutagenesis site" description="Has no effect on IgM BCR assembly; when associated with A-364." evidence="17">
    <original>Q</original>
    <variation>A</variation>
    <location>
        <position position="370"/>
    </location>
</feature>
<feature type="mutagenesis site" description="Has little effect on IgM BCR assembly; when associated with A-410." evidence="17">
    <original>T</original>
    <variation>A</variation>
    <location>
        <position position="407"/>
    </location>
</feature>
<feature type="mutagenesis site" description="Has little effect on IgM BCR assembly; when associated with A-407." evidence="17">
    <original>T</original>
    <variation>A</variation>
    <location>
        <position position="410"/>
    </location>
</feature>
<feature type="mutagenesis site" description="Blocks IgM BCR assembly; when associated with A-442." evidence="17">
    <original>D</original>
    <variation>A</variation>
    <location>
        <position position="430"/>
    </location>
</feature>
<feature type="mutagenesis site" description="Blocks IgM BCR assembly; when associated with A-430." evidence="17">
    <original>E</original>
    <variation>A</variation>
    <location>
        <position position="442"/>
    </location>
</feature>
<feature type="mutagenesis site" description="Blocks IgM BCR assembly; when associated with A-464." evidence="17">
    <original>T</original>
    <variation>A</variation>
    <location>
        <position position="450"/>
    </location>
</feature>
<feature type="mutagenesis site" description="Blocks IgM BCR assembly." evidence="17">
    <original>F</original>
    <variation>W</variation>
    <location>
        <position position="454"/>
    </location>
</feature>
<feature type="mutagenesis site" description="Blocks IgM BCR assembly." evidence="17">
    <original>F</original>
    <variation>W</variation>
    <location>
        <position position="458"/>
    </location>
</feature>
<feature type="mutagenesis site" description="Blocks IgM BCR assembly; when associated with A-450." evidence="17">
    <original>Y</original>
    <variation>A</variation>
    <location>
        <position position="464"/>
    </location>
</feature>
<feature type="sequence conflict" description="In Ref. 5; CAA34971." evidence="29" ref="5">
    <original>R</original>
    <variation>RS</variation>
    <location>
        <position position="128"/>
    </location>
</feature>
<feature type="sequence conflict" description="In Ref. 8; AA sequence." evidence="29" ref="8">
    <original>Q</original>
    <variation>E</variation>
    <location>
        <position position="145"/>
    </location>
</feature>
<feature type="sequence conflict" description="In Ref. 8; AA sequence." evidence="29" ref="8">
    <original>QVQ</original>
    <variation>EVE</variation>
    <location>
        <begin position="163"/>
        <end position="165"/>
    </location>
</feature>
<feature type="sequence conflict" description="In Ref. 6; CAB37838." evidence="29" ref="6">
    <original>T</original>
    <variation>I</variation>
    <location>
        <position position="220"/>
    </location>
</feature>
<feature type="sequence conflict" description="In Ref. 8; AA sequence." evidence="29" ref="8">
    <original>N</original>
    <variation>D</variation>
    <location>
        <position position="263"/>
    </location>
</feature>
<feature type="sequence conflict" description="In Ref. 8; AA sequence." evidence="29" ref="8">
    <original>N</original>
    <variation>D</variation>
    <location>
        <position position="296"/>
    </location>
</feature>
<feature type="sequence conflict" description="In Ref. 10; AAB59422." evidence="29" ref="10">
    <original>S</original>
    <variation>N</variation>
    <location>
        <position position="438"/>
    </location>
</feature>
<feature type="sequence conflict" description="In Ref. 10; AAB59422." evidence="29" ref="10">
    <original>D</original>
    <variation>E</variation>
    <location>
        <position position="440"/>
    </location>
</feature>
<feature type="sequence conflict" description="In Ref. 10; AAB59422." evidence="29" ref="10">
    <original>A</original>
    <variation>T</variation>
    <location>
        <position position="449"/>
    </location>
</feature>
<feature type="non-terminal residue">
    <location>
        <position position="1"/>
    </location>
</feature>
<feature type="strand" evidence="38">
    <location>
        <begin position="10"/>
        <end position="12"/>
    </location>
</feature>
<feature type="strand" evidence="38">
    <location>
        <begin position="22"/>
        <end position="28"/>
    </location>
</feature>
<feature type="strand" evidence="38">
    <location>
        <begin position="31"/>
        <end position="36"/>
    </location>
</feature>
<feature type="strand" evidence="38">
    <location>
        <begin position="40"/>
        <end position="43"/>
    </location>
</feature>
<feature type="strand" evidence="37">
    <location>
        <begin position="45"/>
        <end position="49"/>
    </location>
</feature>
<feature type="strand" evidence="37">
    <location>
        <begin position="53"/>
        <end position="55"/>
    </location>
</feature>
<feature type="strand" evidence="38">
    <location>
        <begin position="59"/>
        <end position="61"/>
    </location>
</feature>
<feature type="strand" evidence="38">
    <location>
        <begin position="64"/>
        <end position="66"/>
    </location>
</feature>
<feature type="strand" evidence="38">
    <location>
        <begin position="69"/>
        <end position="74"/>
    </location>
</feature>
<feature type="helix" evidence="38">
    <location>
        <begin position="75"/>
        <end position="78"/>
    </location>
</feature>
<feature type="strand" evidence="38">
    <location>
        <begin position="79"/>
        <end position="82"/>
    </location>
</feature>
<feature type="strand" evidence="38">
    <location>
        <begin position="85"/>
        <end position="90"/>
    </location>
</feature>
<feature type="strand" evidence="38">
    <location>
        <begin position="100"/>
        <end position="102"/>
    </location>
</feature>
<feature type="strand" evidence="40">
    <location>
        <begin position="112"/>
        <end position="117"/>
    </location>
</feature>
<feature type="turn" evidence="40">
    <location>
        <begin position="125"/>
        <end position="128"/>
    </location>
</feature>
<feature type="strand" evidence="40">
    <location>
        <begin position="129"/>
        <end position="137"/>
    </location>
</feature>
<feature type="strand" evidence="40">
    <location>
        <begin position="145"/>
        <end position="150"/>
    </location>
</feature>
<feature type="strand" evidence="40">
    <location>
        <begin position="170"/>
        <end position="173"/>
    </location>
</feature>
<feature type="strand" evidence="40">
    <location>
        <begin position="176"/>
        <end position="185"/>
    </location>
</feature>
<feature type="helix" evidence="40">
    <location>
        <begin position="186"/>
        <end position="189"/>
    </location>
</feature>
<feature type="turn" evidence="40">
    <location>
        <begin position="190"/>
        <end position="192"/>
    </location>
</feature>
<feature type="strand" evidence="40">
    <location>
        <begin position="195"/>
        <end position="201"/>
    </location>
</feature>
<feature type="strand" evidence="40">
    <location>
        <begin position="204"/>
        <end position="210"/>
    </location>
</feature>
<feature type="strand" evidence="42">
    <location>
        <begin position="223"/>
        <end position="227"/>
    </location>
</feature>
<feature type="helix" evidence="42">
    <location>
        <begin position="231"/>
        <end position="237"/>
    </location>
</feature>
<feature type="strand" evidence="42">
    <location>
        <begin position="241"/>
        <end position="248"/>
    </location>
</feature>
<feature type="strand" evidence="42">
    <location>
        <begin position="257"/>
        <end position="264"/>
    </location>
</feature>
<feature type="strand" evidence="41">
    <location>
        <begin position="266"/>
        <end position="269"/>
    </location>
</feature>
<feature type="strand" evidence="40">
    <location>
        <begin position="270"/>
        <end position="274"/>
    </location>
</feature>
<feature type="turn" evidence="42">
    <location>
        <begin position="278"/>
        <end position="280"/>
    </location>
</feature>
<feature type="strand" evidence="39">
    <location>
        <begin position="282"/>
        <end position="286"/>
    </location>
</feature>
<feature type="helix" evidence="42">
    <location>
        <begin position="292"/>
        <end position="297"/>
    </location>
</feature>
<feature type="strand" evidence="42">
    <location>
        <begin position="301"/>
        <end position="305"/>
    </location>
</feature>
<feature type="strand" evidence="41">
    <location>
        <begin position="310"/>
        <end position="312"/>
    </location>
</feature>
<feature type="strand" evidence="42">
    <location>
        <begin position="314"/>
        <end position="318"/>
    </location>
</feature>
<feature type="strand" evidence="42">
    <location>
        <begin position="330"/>
        <end position="334"/>
    </location>
</feature>
<feature type="helix" evidence="42">
    <location>
        <begin position="340"/>
        <end position="342"/>
    </location>
</feature>
<feature type="strand" evidence="42">
    <location>
        <begin position="343"/>
        <end position="345"/>
    </location>
</feature>
<feature type="strand" evidence="42">
    <location>
        <begin position="347"/>
        <end position="359"/>
    </location>
</feature>
<feature type="strand" evidence="42">
    <location>
        <begin position="362"/>
        <end position="367"/>
    </location>
</feature>
<feature type="helix" evidence="42">
    <location>
        <begin position="374"/>
        <end position="376"/>
    </location>
</feature>
<feature type="strand" evidence="42">
    <location>
        <begin position="377"/>
        <end position="379"/>
    </location>
</feature>
<feature type="strand" evidence="42">
    <location>
        <begin position="386"/>
        <end position="388"/>
    </location>
</feature>
<feature type="strand" evidence="42">
    <location>
        <begin position="392"/>
        <end position="400"/>
    </location>
</feature>
<feature type="helix" evidence="42">
    <location>
        <begin position="402"/>
        <end position="406"/>
    </location>
</feature>
<feature type="strand" evidence="42">
    <location>
        <begin position="411"/>
        <end position="416"/>
    </location>
</feature>
<feature type="strand" evidence="42">
    <location>
        <begin position="420"/>
        <end position="423"/>
    </location>
</feature>
<feature type="strand" evidence="42">
    <location>
        <begin position="426"/>
        <end position="429"/>
    </location>
</feature>
<feature type="strand" evidence="42">
    <location>
        <begin position="431"/>
        <end position="433"/>
    </location>
</feature>
<feature type="helix" evidence="40">
    <location>
        <begin position="439"/>
        <end position="473"/>
    </location>
</feature>
<feature type="region of interest" description="Important for IgM oligomerization" evidence="16">
    <location sequence="P01871-1">
        <begin position="437"/>
        <end position="453"/>
    </location>
</feature>
<feature type="glycosylation site" id="CAR_000219" description="N-linked (GlcNAc...) asparagine" evidence="16 20 35">
    <location sequence="P01871-1">
        <position position="440"/>
    </location>
</feature>
<feature type="disulfide bond" description="Interchain (with C-37 or C-91 of JCHAIN)" evidence="6 16 35">
    <location sequence="P01871-1">
        <position position="452"/>
    </location>
</feature>
<proteinExistence type="evidence at protein level"/>
<dbReference type="EMBL" id="X14940">
    <property type="protein sequence ID" value="CAE82013.1"/>
    <property type="status" value="ALT_INIT"/>
    <property type="molecule type" value="Genomic_DNA"/>
</dbReference>
<dbReference type="EMBL" id="X14940">
    <property type="protein sequence ID" value="CAE82014.1"/>
    <property type="status" value="ALT_INIT"/>
    <property type="molecule type" value="Genomic_DNA"/>
</dbReference>
<dbReference type="EMBL" id="X14940">
    <property type="protein sequence ID" value="CAA33069.1"/>
    <property type="status" value="ALT_INIT"/>
    <property type="molecule type" value="Genomic_DNA"/>
</dbReference>
<dbReference type="EMBL" id="X14940">
    <property type="protein sequence ID" value="CAA33070.1"/>
    <property type="molecule type" value="Genomic_DNA"/>
</dbReference>
<dbReference type="EMBL" id="X14940">
    <property type="protein sequence ID" value="CAA33071.1"/>
    <property type="status" value="ALT_SEQ"/>
    <property type="molecule type" value="Genomic_DNA"/>
</dbReference>
<dbReference type="EMBL" id="X14939">
    <property type="protein sequence ID" value="CAA33065.1"/>
    <property type="status" value="ALT_INIT"/>
    <property type="molecule type" value="Genomic_DNA"/>
</dbReference>
<dbReference type="EMBL" id="X17115">
    <property type="protein sequence ID" value="CAA34971.1"/>
    <property type="status" value="ALT_INIT"/>
    <property type="molecule type" value="mRNA"/>
</dbReference>
<dbReference type="EMBL" id="X57086">
    <property type="protein sequence ID" value="CAB37838.1"/>
    <property type="molecule type" value="mRNA"/>
</dbReference>
<dbReference type="EMBL" id="AC244226">
    <property type="status" value="NOT_ANNOTATED_CDS"/>
    <property type="molecule type" value="Genomic_DNA"/>
</dbReference>
<dbReference type="EMBL" id="AC245166">
    <property type="status" value="NOT_ANNOTATED_CDS"/>
    <property type="molecule type" value="Genomic_DNA"/>
</dbReference>
<dbReference type="EMBL" id="AC246787">
    <property type="status" value="NOT_ANNOTATED_CDS"/>
    <property type="molecule type" value="Genomic_DNA"/>
</dbReference>
<dbReference type="EMBL" id="AC247036">
    <property type="status" value="NOT_ANNOTATED_CDS"/>
    <property type="molecule type" value="Genomic_DNA"/>
</dbReference>
<dbReference type="EMBL" id="K01310">
    <property type="protein sequence ID" value="AAB59422.1"/>
    <property type="molecule type" value="Genomic_DNA"/>
</dbReference>
<dbReference type="PIR" id="A02163">
    <property type="entry name" value="MHHUBT"/>
</dbReference>
<dbReference type="PIR" id="S14683">
    <property type="entry name" value="S14683"/>
</dbReference>
<dbReference type="PIR" id="S16510">
    <property type="entry name" value="MHHUM"/>
</dbReference>
<dbReference type="PDB" id="1HEZ">
    <property type="method" value="X-ray"/>
    <property type="resolution" value="2.70 A"/>
    <property type="chains" value="B/D=1-104"/>
</dbReference>
<dbReference type="PDB" id="2AGJ">
    <property type="method" value="X-ray"/>
    <property type="resolution" value="2.60 A"/>
    <property type="chains" value="H=1-105"/>
</dbReference>
<dbReference type="PDB" id="2RCJ">
    <property type="method" value="X-ray"/>
    <property type="chains" value="C/D/G/H/K/L/O/P/S/T=1-326"/>
</dbReference>
<dbReference type="PDB" id="6KXS">
    <property type="method" value="EM"/>
    <property type="resolution" value="3.40 A"/>
    <property type="chains" value="A/B/C/D/E/F/G/H/K/L=106-453"/>
</dbReference>
<dbReference type="PDB" id="7K0C">
    <property type="method" value="EM"/>
    <property type="resolution" value="3.30 A"/>
    <property type="chains" value="A/B/E/F/G/H/I/J/K/L=103-453"/>
</dbReference>
<dbReference type="PDB" id="7QDO">
    <property type="method" value="EM"/>
    <property type="resolution" value="3.60 A"/>
    <property type="chains" value="A/B=105-433"/>
</dbReference>
<dbReference type="PDB" id="7WSP">
    <property type="method" value="EM"/>
    <property type="resolution" value="4.09 A"/>
    <property type="chains" value="B/D=106-433"/>
</dbReference>
<dbReference type="PDB" id="7XQ8">
    <property type="method" value="EM"/>
    <property type="resolution" value="3.30 A"/>
    <property type="chains" value="C/v=1-433"/>
</dbReference>
<dbReference type="PDB" id="7XT6">
    <property type="method" value="EM"/>
    <property type="resolution" value="3.63 A"/>
    <property type="chains" value="B/D=109-433"/>
</dbReference>
<dbReference type="PDB" id="7Y09">
    <property type="method" value="EM"/>
    <property type="resolution" value="3.71 A"/>
    <property type="chains" value="A/B/C/D/E/F/G/H/K/L=106-453"/>
</dbReference>
<dbReference type="PDB" id="7Y0H">
    <property type="method" value="EM"/>
    <property type="resolution" value="3.56 A"/>
    <property type="chains" value="A/B/C/D/E/F/G/H/K/L=106-453"/>
</dbReference>
<dbReference type="PDB" id="7Y0J">
    <property type="method" value="EM"/>
    <property type="resolution" value="3.62 A"/>
    <property type="chains" value="A/B/C/D/E/F/G/H/K/L=106-453"/>
</dbReference>
<dbReference type="PDB" id="7YG2">
    <property type="method" value="EM"/>
    <property type="resolution" value="3.32 A"/>
    <property type="chains" value="A/B/C/D/E/F/G/H/K/L=106-453"/>
</dbReference>
<dbReference type="PDB" id="7YSG">
    <property type="method" value="EM"/>
    <property type="resolution" value="3.18 A"/>
    <property type="chains" value="A/B/C/D/E/F/G/H/K/L=222-453"/>
</dbReference>
<dbReference type="PDB" id="7YTC">
    <property type="method" value="EM"/>
    <property type="resolution" value="3.39 A"/>
    <property type="chains" value="A/B/C/D/E/F/G/H/K/L=222-453"/>
</dbReference>
<dbReference type="PDB" id="7YTD">
    <property type="method" value="EM"/>
    <property type="resolution" value="3.71 A"/>
    <property type="chains" value="A/B/C/D/E/F/G/H/K/L=222-452"/>
</dbReference>
<dbReference type="PDB" id="8ADY">
    <property type="method" value="EM"/>
    <property type="resolution" value="5.20 A"/>
    <property type="chains" value="C/D/E/F/G/K/N/O/R/T=105-453"/>
</dbReference>
<dbReference type="PDB" id="8ADZ">
    <property type="method" value="EM"/>
    <property type="resolution" value="6.70 A"/>
    <property type="chains" value="E/F/G/K/M/N/O/Q/R/S=105-453"/>
</dbReference>
<dbReference type="PDB" id="8AE0">
    <property type="method" value="EM"/>
    <property type="resolution" value="7.10 A"/>
    <property type="chains" value="C/D/E/F/G/K/N/O/R/T=105-453"/>
</dbReference>
<dbReference type="PDB" id="8AE2">
    <property type="method" value="EM"/>
    <property type="resolution" value="8.50 A"/>
    <property type="chains" value="C/D/E/F/G/K/N/O/R/T=105-453"/>
</dbReference>
<dbReference type="PDB" id="8AE3">
    <property type="method" value="EM"/>
    <property type="resolution" value="6.80 A"/>
    <property type="chains" value="C/D/E/F/G/K/N/O/R/T=105-453"/>
</dbReference>
<dbReference type="PDB" id="8BPF">
    <property type="method" value="EM"/>
    <property type="resolution" value="3.50 A"/>
    <property type="chains" value="A/B/C/D/E/F/G/H/K/L=106-453"/>
</dbReference>
<dbReference type="PDB" id="8BPG">
    <property type="method" value="EM"/>
    <property type="resolution" value="3.10 A"/>
    <property type="chains" value="C/D/E/F=106-453"/>
</dbReference>
<dbReference type="PDB" id="8GZN">
    <property type="method" value="EM"/>
    <property type="resolution" value="3.60 A"/>
    <property type="chains" value="A/B/C/D/E/F/G/H/K/L=1-453"/>
</dbReference>
<dbReference type="PDB" id="8R83">
    <property type="method" value="EM"/>
    <property type="resolution" value="3.57 A"/>
    <property type="chains" value="A/B/C/D/E/F/G/H/K/L=106-433"/>
</dbReference>
<dbReference type="PDB" id="8R84">
    <property type="method" value="EM"/>
    <property type="resolution" value="3.60 A"/>
    <property type="chains" value="A/B/K/L=106-433"/>
</dbReference>
<dbReference type="PDB" id="8WYR">
    <property type="method" value="EM"/>
    <property type="resolution" value="3.39 A"/>
    <property type="chains" value="A/B/C/D/E/F/G/H/K/L=106-433"/>
</dbReference>
<dbReference type="PDB" id="8WYS">
    <property type="method" value="EM"/>
    <property type="resolution" value="3.41 A"/>
    <property type="chains" value="A/L=106-433"/>
</dbReference>
<dbReference type="PDB" id="9ARV">
    <property type="method" value="EM"/>
    <property type="resolution" value="3.60 A"/>
    <property type="chains" value="A/B/C/D/E/L/M/N/O/P=106-433"/>
</dbReference>
<dbReference type="PDBsum" id="1HEZ"/>
<dbReference type="PDBsum" id="2AGJ"/>
<dbReference type="PDBsum" id="2RCJ"/>
<dbReference type="PDBsum" id="6KXS"/>
<dbReference type="PDBsum" id="7K0C"/>
<dbReference type="PDBsum" id="7QDO"/>
<dbReference type="PDBsum" id="7WSP"/>
<dbReference type="PDBsum" id="7XQ8"/>
<dbReference type="PDBsum" id="7XT6"/>
<dbReference type="PDBsum" id="7Y09"/>
<dbReference type="PDBsum" id="7Y0H"/>
<dbReference type="PDBsum" id="7Y0J"/>
<dbReference type="PDBsum" id="7YG2"/>
<dbReference type="PDBsum" id="7YSG"/>
<dbReference type="PDBsum" id="7YTC"/>
<dbReference type="PDBsum" id="7YTD"/>
<dbReference type="PDBsum" id="8ADY"/>
<dbReference type="PDBsum" id="8ADZ"/>
<dbReference type="PDBsum" id="8AE0"/>
<dbReference type="PDBsum" id="8AE2"/>
<dbReference type="PDBsum" id="8AE3"/>
<dbReference type="PDBsum" id="8BPF"/>
<dbReference type="PDBsum" id="8BPG"/>
<dbReference type="PDBsum" id="8GZN"/>
<dbReference type="PDBsum" id="8R83"/>
<dbReference type="PDBsum" id="8R84"/>
<dbReference type="PDBsum" id="8WYR"/>
<dbReference type="PDBsum" id="8WYS"/>
<dbReference type="PDBsum" id="9ARV"/>
<dbReference type="EMDB" id="EMD-0782"/>
<dbReference type="EMDB" id="EMD-15375"/>
<dbReference type="EMDB" id="EMD-15376"/>
<dbReference type="EMDB" id="EMD-15377"/>
<dbReference type="EMDB" id="EMD-15379"/>
<dbReference type="EMDB" id="EMD-15380"/>
<dbReference type="EMDB" id="EMD-16150"/>
<dbReference type="EMDB" id="EMD-16151"/>
<dbReference type="EMDB" id="EMD-16152"/>
<dbReference type="EMDB" id="EMD-22591"/>
<dbReference type="EMDB" id="EMD-32763"/>
<dbReference type="EMDB" id="EMD-33538"/>
<dbReference type="EMDB" id="EMD-33542"/>
<dbReference type="EMDB" id="EMD-33547"/>
<dbReference type="EMDB" id="EMD-33805"/>
<dbReference type="EMDB" id="EMD-34074"/>
<dbReference type="EMDB" id="EMD-34085"/>
<dbReference type="EMDB" id="EMD-34086"/>
<dbReference type="EMDB" id="EMD-34399"/>
<dbReference type="EMDB" id="EMD-37936"/>
<dbReference type="EMDB" id="EMD-37937"/>
<dbReference type="EMDB" id="EMD-43795"/>
<dbReference type="SMR" id="P01871"/>
<dbReference type="ComplexPortal" id="CPX-6911">
    <property type="entry name" value="IgM - Ig kappa immunoglobulin complex, constant regions"/>
</dbReference>
<dbReference type="ComplexPortal" id="CPX-6922">
    <property type="entry name" value="IgM - Ig lambda 1 immunoglobulin complex, constant regions"/>
</dbReference>
<dbReference type="ComplexPortal" id="CPX-6923">
    <property type="entry name" value="IgM - Ig lambda 2 immunoglobulin complex, constant regions"/>
</dbReference>
<dbReference type="ComplexPortal" id="CPX-6925">
    <property type="entry name" value="IgM - Ig lambda 3 immunoglobulin complex, constant regions"/>
</dbReference>
<dbReference type="ComplexPortal" id="CPX-6926">
    <property type="entry name" value="IgM - Ig lambda 6 immunoglobulin complex, constant regions"/>
</dbReference>
<dbReference type="ComplexPortal" id="CPX-6927">
    <property type="entry name" value="IgM - Ig lambda 7 immunoglobulin complex, constant regions"/>
</dbReference>
<dbReference type="CORUM" id="P01871"/>
<dbReference type="FunCoup" id="P01871">
    <property type="interactions" value="196"/>
</dbReference>
<dbReference type="IntAct" id="P01871">
    <property type="interactions" value="167"/>
</dbReference>
<dbReference type="MINT" id="P01871"/>
<dbReference type="DrugBank" id="DB01593">
    <property type="generic name" value="Zinc"/>
</dbReference>
<dbReference type="DrugBank" id="DB14487">
    <property type="generic name" value="Zinc acetate"/>
</dbReference>
<dbReference type="IMGT_GENE-DB" id="IGHM"/>
<dbReference type="CarbonylDB" id="P01871"/>
<dbReference type="GlyConnect" id="280">
    <property type="glycosylation" value="204 N-Linked glycans (6 sites)"/>
</dbReference>
<dbReference type="GlyCosmos" id="P01871">
    <property type="glycosylation" value="6 sites, 237 glycans"/>
</dbReference>
<dbReference type="GlyGen" id="P01871">
    <property type="glycosylation" value="8 sites, 198 N-linked glycans (5 sites), 1 O-linked glycan (2 sites)"/>
</dbReference>
<dbReference type="iPTMnet" id="P01871"/>
<dbReference type="PhosphoSitePlus" id="P01871"/>
<dbReference type="SwissPalm" id="P01871"/>
<dbReference type="BioMuta" id="IGHM"/>
<dbReference type="DMDM" id="193806374"/>
<dbReference type="CPTAC" id="non-CPTAC-2676"/>
<dbReference type="jPOST" id="P01871"/>
<dbReference type="MassIVE" id="P01871"/>
<dbReference type="PRIDE" id="P01871"/>
<dbReference type="ProteomicsDB" id="51498">
    <molecule id="P01871-1"/>
</dbReference>
<dbReference type="ProteomicsDB" id="51499">
    <molecule id="P01871-2"/>
</dbReference>
<dbReference type="Pumba" id="P01871"/>
<dbReference type="ABCD" id="P01871">
    <property type="antibodies" value="10 sequenced antibodies"/>
</dbReference>
<dbReference type="Ensembl" id="ENST00000390559.6">
    <molecule id="P01871-1"/>
    <property type="protein sequence ID" value="ENSP00000375001.2"/>
    <property type="gene ID" value="ENSG00000211899.10"/>
</dbReference>
<dbReference type="Ensembl" id="ENST00000626472.2">
    <molecule id="P01871-1"/>
    <property type="protein sequence ID" value="ENSP00000485962.2"/>
    <property type="gene ID" value="ENSG00000282657.3"/>
</dbReference>
<dbReference type="Ensembl" id="ENST00000637539.2">
    <molecule id="P01871-2"/>
    <property type="protein sequence ID" value="ENSP00000490253.1"/>
    <property type="gene ID" value="ENSG00000211899.10"/>
</dbReference>
<dbReference type="UCSC" id="uc059gdp.1">
    <property type="organism name" value="human"/>
</dbReference>
<dbReference type="AGR" id="HGNC:5541"/>
<dbReference type="GeneCards" id="IGHM"/>
<dbReference type="HGNC" id="HGNC:5541">
    <property type="gene designation" value="IGHM"/>
</dbReference>
<dbReference type="HPA" id="ENSG00000211899">
    <property type="expression patterns" value="Group enriched (intestine, lymphoid tissue)"/>
</dbReference>
<dbReference type="MalaCards" id="IGHM"/>
<dbReference type="MIM" id="147020">
    <property type="type" value="gene"/>
</dbReference>
<dbReference type="MIM" id="601495">
    <property type="type" value="phenotype"/>
</dbReference>
<dbReference type="neXtProt" id="NX_P01871"/>
<dbReference type="OpenTargets" id="ENSG00000211899"/>
<dbReference type="Orphanet" id="33110">
    <property type="disease" value="Autosomal non-syndromic agammaglobulinemia"/>
</dbReference>
<dbReference type="VEuPathDB" id="HostDB:ENSG00000211899"/>
<dbReference type="GeneTree" id="ENSGT00940000161491"/>
<dbReference type="InParanoid" id="P01871"/>
<dbReference type="OMA" id="CEVHSTE"/>
<dbReference type="PAN-GO" id="P01871">
    <property type="GO annotations" value="10 GO annotations based on evolutionary models"/>
</dbReference>
<dbReference type="PhylomeDB" id="P01871"/>
<dbReference type="PathwayCommons" id="P01871"/>
<dbReference type="Reactome" id="R-HSA-202733">
    <property type="pathway name" value="Cell surface interactions at the vascular wall"/>
</dbReference>
<dbReference type="Reactome" id="R-HSA-5690714">
    <property type="pathway name" value="CD22 mediated BCR regulation"/>
</dbReference>
<dbReference type="Reactome" id="R-HSA-9679191">
    <property type="pathway name" value="Potential therapeutics for SARS"/>
</dbReference>
<dbReference type="Reactome" id="R-HSA-983695">
    <property type="pathway name" value="Antigen activates B Cell Receptor (BCR) leading to generation of second messengers"/>
</dbReference>
<dbReference type="SignaLink" id="P01871"/>
<dbReference type="SIGNOR" id="P01871"/>
<dbReference type="CD-CODE" id="FB4E32DD">
    <property type="entry name" value="Presynaptic clusters and postsynaptic densities"/>
</dbReference>
<dbReference type="ChiTaRS" id="IGHM">
    <property type="organism name" value="human"/>
</dbReference>
<dbReference type="EvolutionaryTrace" id="P01871"/>
<dbReference type="Pharos" id="P01871">
    <property type="development level" value="Tbio"/>
</dbReference>
<dbReference type="PRO" id="PR:P01871"/>
<dbReference type="Proteomes" id="UP000005640">
    <property type="component" value="Chromosome 14"/>
</dbReference>
<dbReference type="RNAct" id="P01871">
    <property type="molecule type" value="protein"/>
</dbReference>
<dbReference type="Bgee" id="ENSG00000211899">
    <property type="expression patterns" value="Expressed in spleen and 113 other cell types or tissues"/>
</dbReference>
<dbReference type="GO" id="GO:0072562">
    <property type="term" value="C:blood microparticle"/>
    <property type="evidence" value="ECO:0007005"/>
    <property type="project" value="UniProtKB"/>
</dbReference>
<dbReference type="GO" id="GO:0009986">
    <property type="term" value="C:cell surface"/>
    <property type="evidence" value="ECO:0000314"/>
    <property type="project" value="UniProtKB"/>
</dbReference>
<dbReference type="GO" id="GO:0070062">
    <property type="term" value="C:extracellular exosome"/>
    <property type="evidence" value="ECO:0007005"/>
    <property type="project" value="UniProtKB"/>
</dbReference>
<dbReference type="GO" id="GO:0005615">
    <property type="term" value="C:extracellular space"/>
    <property type="evidence" value="ECO:0000314"/>
    <property type="project" value="UniProtKB"/>
</dbReference>
<dbReference type="GO" id="GO:0071757">
    <property type="term" value="C:hexameric IgM immunoglobulin complex"/>
    <property type="evidence" value="ECO:0000314"/>
    <property type="project" value="UniProtKB"/>
</dbReference>
<dbReference type="GO" id="GO:0071755">
    <property type="term" value="C:IgM B cell receptor complex"/>
    <property type="evidence" value="ECO:0000314"/>
    <property type="project" value="UniProtKB"/>
</dbReference>
<dbReference type="GO" id="GO:0071753">
    <property type="term" value="C:IgM immunoglobulin complex"/>
    <property type="evidence" value="ECO:0000303"/>
    <property type="project" value="ComplexPortal"/>
</dbReference>
<dbReference type="GO" id="GO:0071756">
    <property type="term" value="C:pentameric IgM immunoglobulin complex"/>
    <property type="evidence" value="ECO:0000314"/>
    <property type="project" value="UniProtKB"/>
</dbReference>
<dbReference type="GO" id="GO:0005886">
    <property type="term" value="C:plasma membrane"/>
    <property type="evidence" value="ECO:0000304"/>
    <property type="project" value="Reactome"/>
</dbReference>
<dbReference type="GO" id="GO:0003823">
    <property type="term" value="F:antigen binding"/>
    <property type="evidence" value="ECO:0000304"/>
    <property type="project" value="UniProtKB"/>
</dbReference>
<dbReference type="GO" id="GO:0002250">
    <property type="term" value="P:adaptive immune response"/>
    <property type="evidence" value="ECO:0000314"/>
    <property type="project" value="UniProtKB"/>
</dbReference>
<dbReference type="GO" id="GO:0019731">
    <property type="term" value="P:antibacterial humoral response"/>
    <property type="evidence" value="ECO:0000314"/>
    <property type="project" value="UniProtKB"/>
</dbReference>
<dbReference type="GO" id="GO:0050853">
    <property type="term" value="P:B cell receptor signaling pathway"/>
    <property type="evidence" value="ECO:0000303"/>
    <property type="project" value="ComplexPortal"/>
</dbReference>
<dbReference type="GO" id="GO:0050829">
    <property type="term" value="P:defense response to Gram-negative bacterium"/>
    <property type="evidence" value="ECO:0000314"/>
    <property type="project" value="UniProtKB"/>
</dbReference>
<dbReference type="GO" id="GO:0045087">
    <property type="term" value="P:innate immune response"/>
    <property type="evidence" value="ECO:0000314"/>
    <property type="project" value="UniProtKB"/>
</dbReference>
<dbReference type="GO" id="GO:0002331">
    <property type="term" value="P:pre-B cell allelic exclusion"/>
    <property type="evidence" value="ECO:0000250"/>
    <property type="project" value="UniProtKB"/>
</dbReference>
<dbReference type="CDD" id="cd21819">
    <property type="entry name" value="IgC1_CH1_IgM"/>
    <property type="match status" value="1"/>
</dbReference>
<dbReference type="CDD" id="cd16093">
    <property type="entry name" value="IgC1_CH2_Mu"/>
    <property type="match status" value="1"/>
</dbReference>
<dbReference type="CDD" id="cd07696">
    <property type="entry name" value="IgC1_CH3_IgAEM_CH2_IgG"/>
    <property type="match status" value="1"/>
</dbReference>
<dbReference type="CDD" id="cd05768">
    <property type="entry name" value="IgC1_CH3_IgAGD_CH4_IgAEM"/>
    <property type="match status" value="1"/>
</dbReference>
<dbReference type="FunFam" id="2.60.40.10:FF:000998">
    <property type="entry name" value="Immunoglobulin heavy constant epsilon"/>
    <property type="match status" value="1"/>
</dbReference>
<dbReference type="FunFam" id="2.60.40.10:FF:000463">
    <property type="entry name" value="Immunoglobulin heavy constant gamma 1"/>
    <property type="match status" value="2"/>
</dbReference>
<dbReference type="FunFam" id="2.60.40.10:FF:001836">
    <property type="entry name" value="Immunoglobulin heavy constant mu"/>
    <property type="match status" value="1"/>
</dbReference>
<dbReference type="Gene3D" id="2.60.40.10">
    <property type="entry name" value="Immunoglobulins"/>
    <property type="match status" value="4"/>
</dbReference>
<dbReference type="InterPro" id="IPR007110">
    <property type="entry name" value="Ig-like_dom"/>
</dbReference>
<dbReference type="InterPro" id="IPR036179">
    <property type="entry name" value="Ig-like_dom_sf"/>
</dbReference>
<dbReference type="InterPro" id="IPR013783">
    <property type="entry name" value="Ig-like_fold"/>
</dbReference>
<dbReference type="InterPro" id="IPR003006">
    <property type="entry name" value="Ig/MHC_CS"/>
</dbReference>
<dbReference type="InterPro" id="IPR003597">
    <property type="entry name" value="Ig_C1-set"/>
</dbReference>
<dbReference type="InterPro" id="IPR050380">
    <property type="entry name" value="Immune_Resp_Modulators"/>
</dbReference>
<dbReference type="PANTHER" id="PTHR23411">
    <property type="entry name" value="TAPASIN"/>
    <property type="match status" value="1"/>
</dbReference>
<dbReference type="Pfam" id="PF07654">
    <property type="entry name" value="C1-set"/>
    <property type="match status" value="4"/>
</dbReference>
<dbReference type="SMART" id="SM00407">
    <property type="entry name" value="IGc1"/>
    <property type="match status" value="4"/>
</dbReference>
<dbReference type="SUPFAM" id="SSF48726">
    <property type="entry name" value="Immunoglobulin"/>
    <property type="match status" value="4"/>
</dbReference>
<dbReference type="PROSITE" id="PS50835">
    <property type="entry name" value="IG_LIKE"/>
    <property type="match status" value="4"/>
</dbReference>
<dbReference type="PROSITE" id="PS00290">
    <property type="entry name" value="IG_MHC"/>
    <property type="match status" value="3"/>
</dbReference>
<accession>P01871</accession>
<accession>A0A075B6N9</accession>
<accession>A0A0G2JQL4</accession>
<accession>P04220</accession>
<accession>P20769</accession>
<reference key="1">
    <citation type="journal article" date="1973" name="Hoppe-Seyler's Z. Physiol. Chem.">
        <title>The primary structure of a monoclonal IgM-immunoglobulin (macroglobulin Gal.), II: the amino acid sequence of the H-chain (mu-type), subgroup H III. Architecture of the complete IgM-molecule.</title>
        <authorList>
            <person name="Watanabe S."/>
            <person name="Barnikol H.U."/>
            <person name="Horn J."/>
            <person name="Bertram J."/>
            <person name="Hilschmann N."/>
        </authorList>
    </citation>
    <scope>PROTEIN SEQUENCE</scope>
</reference>
<reference key="2">
    <citation type="journal article" date="1980" name="Eur. J. Biochem.">
        <title>The primary structure of the constant part of mu-chain-disease protein BOT.</title>
        <authorList>
            <person name="Mihaesco E."/>
            <person name="Barnikol-Watanabe S."/>
            <person name="Barnikol H.U."/>
            <person name="Mihaesco C."/>
            <person name="Hilschmann N."/>
        </authorList>
    </citation>
    <scope>SEQUENCE REVISION</scope>
</reference>
<reference key="3">
    <citation type="journal article" date="1973" name="Science">
        <title>Complete amino acid sequence of the Mu heavy chain of a human IgM immunoglobulin.</title>
        <authorList>
            <person name="Putnam F.W."/>
            <person name="Florent G."/>
            <person name="Paul C."/>
            <person name="Shinoda T."/>
            <person name="Shimizu A."/>
        </authorList>
    </citation>
    <scope>PROTEIN SEQUENCE</scope>
    <scope>DISULFIDE BONDS</scope>
    <scope>GLYCOSYLATION AT ASN-272 AND ASN-279</scope>
    <scope>GLYCOSYLATION AT ASN-440 (ISOFORM 1)</scope>
</reference>
<reference key="4">
    <citation type="journal article" date="1989" name="Nucleic Acids Res.">
        <title>The complete nucleotide sequence of a human immunoglobulin genomic C mu gene.</title>
        <authorList>
            <person name="Dorai H."/>
            <person name="Gillies S.D."/>
        </authorList>
    </citation>
    <scope>NUCLEOTIDE SEQUENCE [GENOMIC DNA] (ISOFORM 1)</scope>
    <scope>NUCLEOTIDE SEQUENCE [GENOMIC DNA] OF 435-472 (ISOFORM 2)</scope>
    <scope>VARIANTS LEU-40 AND VAL-414 DEL</scope>
</reference>
<reference key="5">
    <citation type="journal article" date="1990" name="Nucleic Acids Res.">
        <title>Complete nucleotide sequence of the membrane form of the human IgM heavy chain.</title>
        <authorList>
            <person name="Friedlander R.M."/>
            <person name="Nussenzweig M.C."/>
            <person name="Leder P."/>
        </authorList>
    </citation>
    <scope>NUCLEOTIDE SEQUENCE [MRNA] (ISOFORM 2)</scope>
    <scope>VARIANT SER-191</scope>
</reference>
<reference key="6">
    <citation type="submission" date="1990-12" db="EMBL/GenBank/DDBJ databases">
        <title>Complete nucleotide sequence of a cDNA encoding human IgM heavy chain constant domains.</title>
        <authorList>
            <person name="Calvo B.F."/>
            <person name="Schlom J."/>
            <person name="Kashmiri S."/>
        </authorList>
    </citation>
    <scope>NUCLEOTIDE SEQUENCE [MRNA] (ISOFORM 1)</scope>
</reference>
<reference key="7">
    <citation type="journal article" date="2003" name="Nature">
        <title>The DNA sequence and analysis of human chromosome 14.</title>
        <authorList>
            <person name="Heilig R."/>
            <person name="Eckenberg R."/>
            <person name="Petit J.-L."/>
            <person name="Fonknechten N."/>
            <person name="Da Silva C."/>
            <person name="Cattolico L."/>
            <person name="Levy M."/>
            <person name="Barbe V."/>
            <person name="De Berardinis V."/>
            <person name="Ureta-Vidal A."/>
            <person name="Pelletier E."/>
            <person name="Vico V."/>
            <person name="Anthouard V."/>
            <person name="Rowen L."/>
            <person name="Madan A."/>
            <person name="Qin S."/>
            <person name="Sun H."/>
            <person name="Du H."/>
            <person name="Pepin K."/>
            <person name="Artiguenave F."/>
            <person name="Robert C."/>
            <person name="Cruaud C."/>
            <person name="Bruels T."/>
            <person name="Jaillon O."/>
            <person name="Friedlander L."/>
            <person name="Samson G."/>
            <person name="Brottier P."/>
            <person name="Cure S."/>
            <person name="Segurens B."/>
            <person name="Aniere F."/>
            <person name="Samain S."/>
            <person name="Crespeau H."/>
            <person name="Abbasi N."/>
            <person name="Aiach N."/>
            <person name="Boscus D."/>
            <person name="Dickhoff R."/>
            <person name="Dors M."/>
            <person name="Dubois I."/>
            <person name="Friedman C."/>
            <person name="Gouyvenoux M."/>
            <person name="James R."/>
            <person name="Madan A."/>
            <person name="Mairey-Estrada B."/>
            <person name="Mangenot S."/>
            <person name="Martins N."/>
            <person name="Menard M."/>
            <person name="Oztas S."/>
            <person name="Ratcliffe A."/>
            <person name="Shaffer T."/>
            <person name="Trask B."/>
            <person name="Vacherie B."/>
            <person name="Bellemere C."/>
            <person name="Belser C."/>
            <person name="Besnard-Gonnet M."/>
            <person name="Bartol-Mavel D."/>
            <person name="Boutard M."/>
            <person name="Briez-Silla S."/>
            <person name="Combette S."/>
            <person name="Dufosse-Laurent V."/>
            <person name="Ferron C."/>
            <person name="Lechaplais C."/>
            <person name="Louesse C."/>
            <person name="Muselet D."/>
            <person name="Magdelenat G."/>
            <person name="Pateau E."/>
            <person name="Petit E."/>
            <person name="Sirvain-Trukniewicz P."/>
            <person name="Trybou A."/>
            <person name="Vega-Czarny N."/>
            <person name="Bataille E."/>
            <person name="Bluet E."/>
            <person name="Bordelais I."/>
            <person name="Dubois M."/>
            <person name="Dumont C."/>
            <person name="Guerin T."/>
            <person name="Haffray S."/>
            <person name="Hammadi R."/>
            <person name="Muanga J."/>
            <person name="Pellouin V."/>
            <person name="Robert D."/>
            <person name="Wunderle E."/>
            <person name="Gauguet G."/>
            <person name="Roy A."/>
            <person name="Sainte-Marthe L."/>
            <person name="Verdier J."/>
            <person name="Verdier-Discala C."/>
            <person name="Hillier L.W."/>
            <person name="Fulton L."/>
            <person name="McPherson J."/>
            <person name="Matsuda F."/>
            <person name="Wilson R."/>
            <person name="Scarpelli C."/>
            <person name="Gyapay G."/>
            <person name="Wincker P."/>
            <person name="Saurin W."/>
            <person name="Quetier F."/>
            <person name="Waterston R."/>
            <person name="Hood L."/>
            <person name="Weissenbach J."/>
        </authorList>
    </citation>
    <scope>NUCLEOTIDE SEQUENCE [LARGE SCALE GENOMIC DNA] (IMGT ALLELE IGHM*04)</scope>
</reference>
<reference key="8">
    <citation type="journal article" date="1984" name="Hoppe-Seyler's Z. Physiol. Chem.">
        <title>The primary structure of mu-chain-disease protein BOT. Peculiar amino-acid sequence of the N-terminal 42 positions.</title>
        <authorList>
            <person name="Barnikol-Watanabe S."/>
            <person name="Mihaesco E."/>
            <person name="Mihaesco C."/>
            <person name="Barnikol H.U."/>
            <person name="Hilschmann N."/>
        </authorList>
    </citation>
    <scope>PROTEIN SEQUENCE OF 104-453</scope>
    <scope>VARIANT GLY-215</scope>
</reference>
<reference key="9">
    <citation type="journal article" date="1980" name="Proc. Natl. Acad. Sci. U.S.A.">
        <title>Cloning and partial nucleotide sequence of human immunoglobulin mu chain cDNA from B cells and mouse-human hybridomas.</title>
        <authorList>
            <person name="Dolby T.W."/>
            <person name="Devuono J."/>
            <person name="Croce C.M."/>
        </authorList>
    </citation>
    <scope>NUCLEOTIDE SEQUENCE [MRNA] OF 298-386 AND 436-452 (ISOFORM 1)</scope>
</reference>
<reference key="10">
    <citation type="journal article" date="1981" name="Nucleic Acids Res.">
        <title>Human immunoglobulin heavy chain genes: evolutionary comparisons of C mu, C delta and C gamma genes and associated switch sequences.</title>
        <authorList>
            <person name="Rabbitts T.H."/>
            <person name="Forster A."/>
            <person name="Milstein C.P."/>
        </authorList>
    </citation>
    <scope>NUCLEOTIDE SEQUENCE [GENOMIC DNA] OF 339-472 (ISOFORM 2)</scope>
    <scope>VARIANTS VAL-414 DEL AND ASP-418</scope>
</reference>
<reference key="11">
    <citation type="journal article" date="1988" name="Proc. Natl. Acad. Sci. U.S.A.">
        <title>Functional differences between immunoglobulins M and D expressed on the surface of an immature B-cell line.</title>
        <authorList>
            <person name="Tisch R."/>
            <person name="Roifman C.M."/>
            <person name="Hozumi N."/>
        </authorList>
    </citation>
    <scope>FUNCTION</scope>
</reference>
<reference key="12">
    <citation type="journal article" date="1992" name="Biochemistry">
        <title>Disulfide bond assignment in human J chain and its covalent pairing with immunoglobulin M.</title>
        <authorList>
            <person name="Frutiger S."/>
            <person name="Hughes G.J."/>
            <person name="Paquet N."/>
            <person name="Luethy R."/>
            <person name="Jaton J.-C."/>
        </authorList>
    </citation>
    <scope>SUBUNIT (ISOFORM 1)</scope>
    <scope>DISULFIDE BOND WITH JCHAIN (ISOFORM 1)</scope>
</reference>
<reference key="13">
    <citation type="journal article" date="2001" name="Exp. Clin. Immunogenet.">
        <title>Nomenclature of the human immunoglobulin heavy (IGH) genes.</title>
        <authorList>
            <person name="Lefranc M.P."/>
        </authorList>
    </citation>
    <scope>NOMENCLATURE</scope>
</reference>
<reference key="14">
    <citation type="book" date="2001" name="The Immunoglobulin FactsBook.">
        <title>The Immunoglobulin FactsBook.</title>
        <editorList>
            <person name="Lefranc M.P."/>
            <person name="Lefranc G."/>
        </editorList>
        <authorList>
            <person name="Lefranc M.P."/>
            <person name="Lefranc G."/>
        </authorList>
    </citation>
    <scope>NOMENCLATURE</scope>
</reference>
<reference key="15">
    <citation type="journal article" date="2003" name="J. Immunol.">
        <title>Modular organization of the carboxyl-terminal, globular head region of human C1q A, B, and C chains.</title>
        <authorList>
            <person name="Kishore U."/>
            <person name="Gupta S.K."/>
            <person name="Perdikoulis M.V."/>
            <person name="Kojouharova M.S."/>
            <person name="Urban B.C."/>
            <person name="Reid K.B."/>
        </authorList>
    </citation>
    <scope>FUNCTION (ISOFORM 1)</scope>
    <scope>SUBUNIT (ISOFORM 1)</scope>
    <scope>INTERACTION WITH C1Q (ISOFORM 1)</scope>
</reference>
<reference key="16">
    <citation type="journal article" date="2004" name="Proteomics">
        <title>Screening for N-glycosylated proteins by liquid chromatography mass spectrometry.</title>
        <authorList>
            <person name="Bunkenborg J."/>
            <person name="Pilch B.J."/>
            <person name="Podtelejnikov A.V."/>
            <person name="Wisniewski J.R."/>
        </authorList>
    </citation>
    <scope>GLYCOSYLATION [LARGE SCALE ANALYSIS] AT ASN-46</scope>
    <source>
        <tissue>Plasma</tissue>
    </source>
</reference>
<reference key="17">
    <citation type="journal article" date="2006" name="Immunology">
        <title>The riddle of the dual expression of IgM and IgD.</title>
        <authorList>
            <person name="Geisberger R."/>
            <person name="Lamers M."/>
            <person name="Achatz G."/>
        </authorList>
    </citation>
    <scope>REVIEW</scope>
</reference>
<reference key="18">
    <citation type="journal article" date="2007" name="Annu. Rev. Genet.">
        <title>Immunoglobulin somatic hypermutation.</title>
        <authorList>
            <person name="Teng G."/>
            <person name="Papavasiliou F.N."/>
        </authorList>
    </citation>
    <scope>REVIEW ON SOMATIC HYPERMUTATION</scope>
</reference>
<reference key="19">
    <citation type="journal article" date="2008" name="Biochemistry">
        <title>Interaction of human C1q with IgG and IgM: revisited.</title>
        <authorList>
            <person name="Gadjeva M.G."/>
            <person name="Rouseva M.M."/>
            <person name="Zlatarova A.S."/>
            <person name="Reid K.B."/>
            <person name="Kishore U."/>
            <person name="Kojouharova M.S."/>
        </authorList>
    </citation>
    <scope>FUNCTION (ISOFORM 1)</scope>
    <scope>SUBUNIT (ISOFORM 1)</scope>
    <scope>INTERACTION WITH C1Q (ISOFORM 1)</scope>
</reference>
<reference key="20">
    <citation type="journal article" date="2009" name="J. Proteome Res.">
        <title>Glycoproteomics analysis of human liver tissue by combination of multiple enzyme digestion and hydrazide chemistry.</title>
        <authorList>
            <person name="Chen R."/>
            <person name="Jiang X."/>
            <person name="Sun D."/>
            <person name="Han G."/>
            <person name="Wang F."/>
            <person name="Ye M."/>
            <person name="Wang L."/>
            <person name="Zou H."/>
        </authorList>
    </citation>
    <scope>GLYCOSYLATION [LARGE SCALE ANALYSIS] AT ASN-46 AND ASN-279</scope>
    <source>
        <tissue>Liver</tissue>
    </source>
</reference>
<reference key="21">
    <citation type="journal article" date="2009" name="Mol. Cell. Proteomics">
        <title>A strategy for precise and large scale identification of core fucosylated glycoproteins.</title>
        <authorList>
            <person name="Jia W."/>
            <person name="Lu Z."/>
            <person name="Fu Y."/>
            <person name="Wang H.P."/>
            <person name="Wang L.H."/>
            <person name="Chi H."/>
            <person name="Yuan Z.F."/>
            <person name="Zheng Z.B."/>
            <person name="Song L.N."/>
            <person name="Han H.H."/>
            <person name="Liang Y.M."/>
            <person name="Wang J.L."/>
            <person name="Cai Y."/>
            <person name="Zhang Y.K."/>
            <person name="Deng Y.L."/>
            <person name="Ying W.T."/>
            <person name="He S.M."/>
            <person name="Qian X.H."/>
        </authorList>
    </citation>
    <scope>GLYCOSYLATION AT ASN-46 AND ASN-209</scope>
</reference>
<reference key="22">
    <citation type="journal article" date="2010" name="J. Allergy Clin. Immunol.">
        <title>Structure and function of immunoglobulins.</title>
        <authorList>
            <person name="Schroeder H.W. Jr."/>
            <person name="Cavacini L."/>
        </authorList>
    </citation>
    <scope>REVIEW ON IMMUNOGLOBULINS</scope>
</reference>
<reference key="23">
    <citation type="journal article" date="2011" name="BMC Syst. Biol.">
        <title>Initial characterization of the human central proteome.</title>
        <authorList>
            <person name="Burkard T.R."/>
            <person name="Planyavsky M."/>
            <person name="Kaupe I."/>
            <person name="Breitwieser F.P."/>
            <person name="Buerckstuemmer T."/>
            <person name="Bennett K.L."/>
            <person name="Superti-Furga G."/>
            <person name="Colinge J."/>
        </authorList>
    </citation>
    <scope>IDENTIFICATION BY MASS SPECTROMETRY [LARGE SCALE ANALYSIS]</scope>
</reference>
<reference key="24">
    <citation type="journal article" date="2012" name="Nat. Rev. Immunol.">
        <title>Molecular programming of B cell memory.</title>
        <authorList>
            <person name="McHeyzer-Williams M."/>
            <person name="Okitsu S."/>
            <person name="Wang N."/>
            <person name="McHeyzer-Williams L."/>
        </authorList>
    </citation>
    <scope>REVIEW ON FUNCTION</scope>
</reference>
<reference key="25">
    <citation type="journal article" date="2014" name="J. Proteomics">
        <title>An enzyme assisted RP-RPLC approach for in-depth analysis of human liver phosphoproteome.</title>
        <authorList>
            <person name="Bian Y."/>
            <person name="Song C."/>
            <person name="Cheng K."/>
            <person name="Dong M."/>
            <person name="Wang F."/>
            <person name="Huang J."/>
            <person name="Sun D."/>
            <person name="Wang L."/>
            <person name="Ye M."/>
            <person name="Zou H."/>
        </authorList>
    </citation>
    <scope>IDENTIFICATION BY MASS SPECTROMETRY [LARGE SCALE ANALYSIS]</scope>
    <source>
        <tissue>Liver</tissue>
    </source>
</reference>
<reference key="26">
    <citation type="journal article" date="2017" name="Sci. Rep.">
        <title>Glycan-independent binding and internalization of human IgM to FCMR, its cognate cellular receptor.</title>
        <authorList>
            <person name="Lloyd K.A."/>
            <person name="Wang J."/>
            <person name="Urban B.C."/>
            <person name="Czajkowsky D.M."/>
            <person name="Pleass R.J."/>
        </authorList>
    </citation>
    <scope>FUNCTION (ISOFORM 1)</scope>
    <scope>SUBUNIT (ISOFORM 1)</scope>
</reference>
<reference key="27">
    <citation type="journal article" date="2018" name="Sci. Adv.">
        <title>The IgM pentamer is an asymmetric pentagon with an open groove that binds the AIM protein.</title>
        <authorList>
            <person name="Hiramoto E."/>
            <person name="Tsutsumi A."/>
            <person name="Suzuki R."/>
            <person name="Matsuoka S."/>
            <person name="Arai S."/>
            <person name="Kikkawa M."/>
            <person name="Miyazaki T."/>
        </authorList>
    </citation>
    <scope>SUBUNIT (ISOFORM 1)</scope>
</reference>
<reference key="28">
    <citation type="journal article" date="2001" name="Structure">
        <title>Complex between Peptostreptococcus magnus protein L and a human antibody reveals structural convergence in the interaction modes of Fab binding proteins.</title>
        <authorList>
            <person name="Graille M."/>
            <person name="Stura E.A."/>
            <person name="Housden N.G."/>
            <person name="Beckingham J.A."/>
            <person name="Bottomley S.P."/>
            <person name="Beale D."/>
            <person name="Taussig M.J."/>
            <person name="Sutton B.J."/>
            <person name="Gore M.G."/>
            <person name="Charbonnier J.B."/>
        </authorList>
    </citation>
    <scope>X-RAY CRYSTALLOGRAPHY (2.70 ANGSTROMS) OF 1-104</scope>
    <scope>DISULFIDE BONDS</scope>
</reference>
<reference key="29">
    <citation type="journal article" date="2006" name="Biochem. J.">
        <title>Crystal structure of a glycosylated Fab from an IgM cryoglobulin with properties of a natural proteolytic antibody.</title>
        <authorList>
            <person name="Ramsland P.A."/>
            <person name="Terzyan S.S."/>
            <person name="Cloud G."/>
            <person name="Bourne C.R."/>
            <person name="Farrugia W."/>
            <person name="Tribbick G."/>
            <person name="Geysen H.M."/>
            <person name="Moomaw C.R."/>
            <person name="Slaughter C.A."/>
            <person name="Edmundson A.B."/>
        </authorList>
    </citation>
    <scope>X-RAY CRYSTALLOGRAPHY (2.60 ANGSTROMS) OF 1-106</scope>
    <scope>GLYCOSYLATION AT ASN-46</scope>
    <scope>DISULFIDE BONDS</scope>
</reference>
<reference key="30">
    <citation type="journal article" date="2020" name="Science">
        <title>Structural insights into immunoglobulin M.</title>
        <authorList>
            <person name="Li Y."/>
            <person name="Wang G."/>
            <person name="Li N."/>
            <person name="Wang Y."/>
            <person name="Zhu Q."/>
            <person name="Chu H."/>
            <person name="Wu W."/>
            <person name="Tan Y."/>
            <person name="Tan Y."/>
            <person name="Yu F."/>
            <person name="Su X.D."/>
            <person name="Gao N."/>
            <person name="Xiao J."/>
        </authorList>
    </citation>
    <scope>STRUCTURE BY ELECTRON MICROSCOPY (3.40 ANGSTROMS) OF 106-453 IN COMPLEX WITH JCHAIN AND SECRETORY COMPONENT OF PIGR (ISOFORM 1)</scope>
    <scope>DISULFIDE BONDS</scope>
    <scope>GLYCOSYLATION (ISOFORM 1)</scope>
    <scope>SUBUNIT (ISOFORM 1)</scope>
    <scope>DOMAIN (ISOFORM 1)</scope>
    <scope>FUNCTION (ISOFORM 1)</scope>
</reference>
<reference key="31">
    <citation type="journal article" date="2022" name="Science">
        <title>Cryo-EM structure of the human IgM B cell receptor.</title>
        <authorList>
            <person name="Su Q."/>
            <person name="Chen M."/>
            <person name="Shi Y."/>
            <person name="Zhang X."/>
            <person name="Huang G."/>
            <person name="Huang B."/>
            <person name="Liu D."/>
            <person name="Liu Z."/>
            <person name="Shi Y."/>
        </authorList>
    </citation>
    <scope>STRUCTURE BY ELECTRON MICROSCOPY (3.30 ANGSTROMS) OF 1-433 (ISOFORM 2) IN COMPLEX WITH CD79A AND CD79B</scope>
    <scope>DISULFIDE BONDS</scope>
    <scope>GLYCOSYLATION AT ASN-209; ASN-272 AND ASN-279</scope>
    <scope>CHARACTERIZATION OF IGM BCR</scope>
    <scope>FUNCTION (ISOFORM 2)</scope>
    <scope>SUBUNIT (ISOFORM 2)</scope>
    <scope>DOMAIN (ISOFORM 2)</scope>
    <scope>MUTAGENESIS OF GLN-364; GLN-370; THR-407; THR-410; ASP-430; GLU-442; THR-450; PHE-454; PHE-458 AND TYR-464</scope>
</reference>
<reference key="32">
    <citation type="journal article" date="2023" name="Nature">
        <title>Immunoglobulin M perception by FcmuR.</title>
        <authorList>
            <person name="Li Y."/>
            <person name="Shen H."/>
            <person name="Zhang R."/>
            <person name="Ji C."/>
            <person name="Wang Y."/>
            <person name="Su C."/>
            <person name="Xiao J."/>
        </authorList>
    </citation>
    <scope>STRUCTURE BY ELECTRON MICROSCOPY (3.18 ANGSTROMS) OF 222-453 IN COMPLEX WITH FCMR</scope>
    <scope>SUBUNIT (ISOFORM 1)</scope>
</reference>
<reference key="33">
    <citation type="journal article" date="2023" name="Nat. Struct. Mol. Biol.">
        <title>Structural basis for Fc receptor recognition of immunoglobulin M.</title>
        <authorList>
            <person name="Chen Q."/>
            <person name="Menon R.P."/>
            <person name="Masino L."/>
            <person name="Tolar P."/>
            <person name="Rosenthal P.B."/>
        </authorList>
    </citation>
    <scope>STRUCTURE BY ELECTRON MICROSCOPY (3.10 ANGSTROMS) OF 223-446 (ISOFORM 1) IN COMPLEX WITH FCMR</scope>
    <scope>DOMAIN (ISOFORM 1)</scope>
    <scope>SUBUNIT (ISOFORM 1)</scope>
    <scope>FUNCTION (ISOFORM 1)</scope>
</reference>
<reference key="34">
    <citation type="journal article" date="1996" name="N. Engl. J. Med.">
        <title>Mutations in the mu heavy-chain gene in patients with agammaglobulinemia.</title>
        <authorList>
            <person name="Yel L."/>
            <person name="Minegishi Y."/>
            <person name="Coustan-Smith E."/>
            <person name="Buckley R.H."/>
            <person name="Trubel H."/>
            <person name="Pachman L.M."/>
            <person name="Kitchingman G.R."/>
            <person name="Campana D."/>
            <person name="Rohrer J."/>
            <person name="Conley M.E."/>
        </authorList>
    </citation>
    <scope>INVOLVEMENT IN AGM1</scope>
</reference>
<protein>
    <recommendedName>
        <fullName evidence="24 28">Immunoglobulin heavy constant mu</fullName>
    </recommendedName>
    <alternativeName>
        <fullName evidence="29">Ig mu chain C region</fullName>
    </alternativeName>
    <alternativeName>
        <fullName evidence="32">Ig mu chain C region BOT</fullName>
    </alternativeName>
    <alternativeName>
        <fullName evidence="31">Ig mu chain C region GAL</fullName>
    </alternativeName>
    <alternativeName>
        <fullName evidence="30">Ig mu chain C region OU</fullName>
    </alternativeName>
</protein>
<sequence>GSASAPTLFPLVSCENSPSDTSSVAVGCLAQDFLPDSITFSWKYKNNSDISSTRGFPSVLRGGKYAATSQVLLPSKDVMQGTDEHVVCKVQHPNGNKEKNVPLPVIAELPPKVSVFVPPRDGFFGNPRKSKLICQATGFSPRQIQVSWLREGKQVGSGVTTDQVQAEAKESGPTTYKVTSTLTIKESDWLGQSMFTCRVDHRGLTFQQNASSMCVPDQDTAIRVFAIPPSFASIFLTKSTKLTCLVTDLTTYDSVTISWTRQNGEAVKTHTNISESHPNATFSAVGEASICEDDWNSGERFTCTVTHTDLPSPLKQTISRPKGVALHRPDVYLLPPAREQLNLRESATITCLVTGFSPADVFVQWMQRGQPLSPEKYVTSAPMPEPQAPGRYFAHSILTVSEEEWNTGETYTCVVAHEALPNRVTERTVDKSTEGEVSADEEGFENLWATASTFIVLFLLSLFYSTTVTLFKVK</sequence>
<gene>
    <name evidence="24 28" type="primary">IGHM</name>
</gene>